<sequence>MAASSSLLLLLHCPTCNFYFDSSSYLKRSRLSSYSSIISRGSPLFVSSFGSMTVKRFSSRVGSRSNDGNEQFGALEQESFINNSSEIRKDLVTGGGIEAIVNRLSKWVVSVLFGSIILLRHDGAALWAVIGSISNSALSVVLKRILNQERPTTTLRSDPGMPSSHAQSISFISVFAVLSVMEWLGTNGVSLFLSGLILALGSYFIRLRVSQKLHTSSQVVVGAIVGSLFCILWYTMWNSLLREAFEASLLVQISVFLFAATFALAFAAYVVLNWFKDER</sequence>
<dbReference type="EC" id="3.1.3.-"/>
<dbReference type="EMBL" id="AL049862">
    <property type="protein sequence ID" value="CAB42921.1"/>
    <property type="molecule type" value="Genomic_DNA"/>
</dbReference>
<dbReference type="EMBL" id="CP002686">
    <property type="protein sequence ID" value="AEE78725.1"/>
    <property type="molecule type" value="Genomic_DNA"/>
</dbReference>
<dbReference type="EMBL" id="CP002686">
    <property type="protein sequence ID" value="AEE78726.1"/>
    <property type="molecule type" value="Genomic_DNA"/>
</dbReference>
<dbReference type="EMBL" id="BT010900">
    <property type="protein sequence ID" value="AAR24678.1"/>
    <property type="molecule type" value="mRNA"/>
</dbReference>
<dbReference type="EMBL" id="AK176736">
    <property type="protein sequence ID" value="BAD44499.1"/>
    <property type="molecule type" value="mRNA"/>
</dbReference>
<dbReference type="PIR" id="T08413">
    <property type="entry name" value="T08413"/>
</dbReference>
<dbReference type="RefSeq" id="NP_001030835.1">
    <molecule id="F4J220-2"/>
    <property type="nucleotide sequence ID" value="NM_001035758.3"/>
</dbReference>
<dbReference type="RefSeq" id="NP_190661.2">
    <molecule id="F4J220-1"/>
    <property type="nucleotide sequence ID" value="NM_114952.4"/>
</dbReference>
<dbReference type="SMR" id="F4J220"/>
<dbReference type="BioGRID" id="9574">
    <property type="interactions" value="8"/>
</dbReference>
<dbReference type="FunCoup" id="F4J220">
    <property type="interactions" value="195"/>
</dbReference>
<dbReference type="IntAct" id="F4J220">
    <property type="interactions" value="8"/>
</dbReference>
<dbReference type="STRING" id="3702.F4J220"/>
<dbReference type="iPTMnet" id="F4J220"/>
<dbReference type="PaxDb" id="3702-AT3G50920.1"/>
<dbReference type="ProteomicsDB" id="238794">
    <molecule id="F4J220-1"/>
</dbReference>
<dbReference type="EnsemblPlants" id="AT3G50920.1">
    <molecule id="F4J220-1"/>
    <property type="protein sequence ID" value="AT3G50920.1"/>
    <property type="gene ID" value="AT3G50920"/>
</dbReference>
<dbReference type="EnsemblPlants" id="AT3G50920.2">
    <molecule id="F4J220-2"/>
    <property type="protein sequence ID" value="AT3G50920.2"/>
    <property type="gene ID" value="AT3G50920"/>
</dbReference>
<dbReference type="Gramene" id="AT3G50920.1">
    <molecule id="F4J220-1"/>
    <property type="protein sequence ID" value="AT3G50920.1"/>
    <property type="gene ID" value="AT3G50920"/>
</dbReference>
<dbReference type="Gramene" id="AT3G50920.2">
    <molecule id="F4J220-2"/>
    <property type="protein sequence ID" value="AT3G50920.2"/>
    <property type="gene ID" value="AT3G50920"/>
</dbReference>
<dbReference type="KEGG" id="ath:AT3G50920"/>
<dbReference type="Araport" id="AT3G50920"/>
<dbReference type="TAIR" id="AT3G50920">
    <property type="gene designation" value="LPPEPSILON1"/>
</dbReference>
<dbReference type="eggNOG" id="KOG3146">
    <property type="taxonomic scope" value="Eukaryota"/>
</dbReference>
<dbReference type="InParanoid" id="F4J220"/>
<dbReference type="OMA" id="SKWIISA"/>
<dbReference type="PhylomeDB" id="F4J220"/>
<dbReference type="PRO" id="PR:F4J220"/>
<dbReference type="Proteomes" id="UP000006548">
    <property type="component" value="Chromosome 3"/>
</dbReference>
<dbReference type="ExpressionAtlas" id="F4J220">
    <property type="expression patterns" value="baseline and differential"/>
</dbReference>
<dbReference type="GO" id="GO:0009507">
    <property type="term" value="C:chloroplast"/>
    <property type="evidence" value="ECO:0000314"/>
    <property type="project" value="TAIR"/>
</dbReference>
<dbReference type="GO" id="GO:0009706">
    <property type="term" value="C:chloroplast inner membrane"/>
    <property type="evidence" value="ECO:0007669"/>
    <property type="project" value="UniProtKB-SubCell"/>
</dbReference>
<dbReference type="GO" id="GO:0008195">
    <property type="term" value="F:phosphatidate phosphatase activity"/>
    <property type="evidence" value="ECO:0000314"/>
    <property type="project" value="TAIR"/>
</dbReference>
<dbReference type="GO" id="GO:0006651">
    <property type="term" value="P:diacylglycerol biosynthetic process"/>
    <property type="evidence" value="ECO:0000314"/>
    <property type="project" value="TAIR"/>
</dbReference>
<dbReference type="CDD" id="cd03382">
    <property type="entry name" value="PAP2_dolichyldiphosphatase"/>
    <property type="match status" value="1"/>
</dbReference>
<dbReference type="FunFam" id="1.20.144.10:FF:000026">
    <property type="entry name" value="Lipid phosphate phosphatase epsilon 2 chloroplastic"/>
    <property type="match status" value="1"/>
</dbReference>
<dbReference type="Gene3D" id="1.20.144.10">
    <property type="entry name" value="Phosphatidic acid phosphatase type 2/haloperoxidase"/>
    <property type="match status" value="1"/>
</dbReference>
<dbReference type="InterPro" id="IPR039667">
    <property type="entry name" value="Dolichyldiphosphatase_PAP2"/>
</dbReference>
<dbReference type="InterPro" id="IPR036938">
    <property type="entry name" value="P_Acid_Pase_2/haloperoxi_sf"/>
</dbReference>
<dbReference type="InterPro" id="IPR000326">
    <property type="entry name" value="P_Acid_Pase_2/haloperoxidase"/>
</dbReference>
<dbReference type="PANTHER" id="PTHR11247:SF40">
    <property type="entry name" value="LIPID PHOSPHATE PHOSPHATASE EPSILON 1, CHLOROPLASTIC"/>
    <property type="match status" value="1"/>
</dbReference>
<dbReference type="PANTHER" id="PTHR11247">
    <property type="entry name" value="PALMITOYL-PROTEIN THIOESTERASE/DOLICHYLDIPHOSPHATASE 1"/>
    <property type="match status" value="1"/>
</dbReference>
<dbReference type="Pfam" id="PF01569">
    <property type="entry name" value="PAP2"/>
    <property type="match status" value="1"/>
</dbReference>
<dbReference type="SMART" id="SM00014">
    <property type="entry name" value="acidPPc"/>
    <property type="match status" value="1"/>
</dbReference>
<dbReference type="SUPFAM" id="SSF48317">
    <property type="entry name" value="Acid phosphatase/Vanadium-dependent haloperoxidase"/>
    <property type="match status" value="1"/>
</dbReference>
<gene>
    <name type="primary">LPPE1</name>
    <name type="ordered locus">At3g50920</name>
    <name type="ORF">F18B3.200</name>
</gene>
<comment type="function">
    <text evidence="2">Exhibits phosphatidate phosphatase (PAP) activity in vitro. May play a secondary role as PAP in plastids.</text>
</comment>
<comment type="activity regulation">
    <text evidence="2">Inhibited by Mg(2+).</text>
</comment>
<comment type="biophysicochemical properties">
    <phDependence>
        <text evidence="2">Optimum pH is 7.0.</text>
    </phDependence>
</comment>
<comment type="subcellular location">
    <subcellularLocation>
        <location evidence="6">Plastid</location>
        <location evidence="6">Chloroplast inner membrane</location>
        <topology evidence="6">Multi-pass membrane protein</topology>
    </subcellularLocation>
</comment>
<comment type="alternative products">
    <event type="alternative splicing"/>
    <isoform>
        <id>F4J220-1</id>
        <name>1</name>
        <sequence type="displayed"/>
    </isoform>
    <isoform>
        <id>F4J220-2</id>
        <name>2</name>
        <sequence type="described" ref="VSP_053603"/>
    </isoform>
</comment>
<comment type="tissue specificity">
    <text evidence="2">Expressed in root tips, root branch points, cotyledons and leaves.</text>
</comment>
<comment type="disruption phenotype">
    <text evidence="2">No visible phenotype under normal growth conditions.</text>
</comment>
<comment type="similarity">
    <text evidence="5">Belongs to the PA-phosphatase related phosphoesterase family.</text>
</comment>
<protein>
    <recommendedName>
        <fullName>Lipid phosphate phosphatase epsilon 1, chloroplastic</fullName>
        <shortName>AtLPPE1</shortName>
        <ecNumber>3.1.3.-</ecNumber>
    </recommendedName>
    <alternativeName>
        <fullName>Phosphatidic acid phosphatase epsilon 1</fullName>
    </alternativeName>
    <alternativeName>
        <fullName>Plastidic phosphatidic acid phosphatase epsilon 1</fullName>
    </alternativeName>
</protein>
<proteinExistence type="evidence at protein level"/>
<reference key="1">
    <citation type="journal article" date="2000" name="Nature">
        <title>Sequence and analysis of chromosome 3 of the plant Arabidopsis thaliana.</title>
        <authorList>
            <person name="Salanoubat M."/>
            <person name="Lemcke K."/>
            <person name="Rieger M."/>
            <person name="Ansorge W."/>
            <person name="Unseld M."/>
            <person name="Fartmann B."/>
            <person name="Valle G."/>
            <person name="Bloecker H."/>
            <person name="Perez-Alonso M."/>
            <person name="Obermaier B."/>
            <person name="Delseny M."/>
            <person name="Boutry M."/>
            <person name="Grivell L.A."/>
            <person name="Mache R."/>
            <person name="Puigdomenech P."/>
            <person name="De Simone V."/>
            <person name="Choisne N."/>
            <person name="Artiguenave F."/>
            <person name="Robert C."/>
            <person name="Brottier P."/>
            <person name="Wincker P."/>
            <person name="Cattolico L."/>
            <person name="Weissenbach J."/>
            <person name="Saurin W."/>
            <person name="Quetier F."/>
            <person name="Schaefer M."/>
            <person name="Mueller-Auer S."/>
            <person name="Gabel C."/>
            <person name="Fuchs M."/>
            <person name="Benes V."/>
            <person name="Wurmbach E."/>
            <person name="Drzonek H."/>
            <person name="Erfle H."/>
            <person name="Jordan N."/>
            <person name="Bangert S."/>
            <person name="Wiedelmann R."/>
            <person name="Kranz H."/>
            <person name="Voss H."/>
            <person name="Holland R."/>
            <person name="Brandt P."/>
            <person name="Nyakatura G."/>
            <person name="Vezzi A."/>
            <person name="D'Angelo M."/>
            <person name="Pallavicini A."/>
            <person name="Toppo S."/>
            <person name="Simionati B."/>
            <person name="Conrad A."/>
            <person name="Hornischer K."/>
            <person name="Kauer G."/>
            <person name="Loehnert T.-H."/>
            <person name="Nordsiek G."/>
            <person name="Reichelt J."/>
            <person name="Scharfe M."/>
            <person name="Schoen O."/>
            <person name="Bargues M."/>
            <person name="Terol J."/>
            <person name="Climent J."/>
            <person name="Navarro P."/>
            <person name="Collado C."/>
            <person name="Perez-Perez A."/>
            <person name="Ottenwaelder B."/>
            <person name="Duchemin D."/>
            <person name="Cooke R."/>
            <person name="Laudie M."/>
            <person name="Berger-Llauro C."/>
            <person name="Purnelle B."/>
            <person name="Masuy D."/>
            <person name="de Haan M."/>
            <person name="Maarse A.C."/>
            <person name="Alcaraz J.-P."/>
            <person name="Cottet A."/>
            <person name="Casacuberta E."/>
            <person name="Monfort A."/>
            <person name="Argiriou A."/>
            <person name="Flores M."/>
            <person name="Liguori R."/>
            <person name="Vitale D."/>
            <person name="Mannhaupt G."/>
            <person name="Haase D."/>
            <person name="Schoof H."/>
            <person name="Rudd S."/>
            <person name="Zaccaria P."/>
            <person name="Mewes H.-W."/>
            <person name="Mayer K.F.X."/>
            <person name="Kaul S."/>
            <person name="Town C.D."/>
            <person name="Koo H.L."/>
            <person name="Tallon L.J."/>
            <person name="Jenkins J."/>
            <person name="Rooney T."/>
            <person name="Rizzo M."/>
            <person name="Walts A."/>
            <person name="Utterback T."/>
            <person name="Fujii C.Y."/>
            <person name="Shea T.P."/>
            <person name="Creasy T.H."/>
            <person name="Haas B."/>
            <person name="Maiti R."/>
            <person name="Wu D."/>
            <person name="Peterson J."/>
            <person name="Van Aken S."/>
            <person name="Pai G."/>
            <person name="Militscher J."/>
            <person name="Sellers P."/>
            <person name="Gill J.E."/>
            <person name="Feldblyum T.V."/>
            <person name="Preuss D."/>
            <person name="Lin X."/>
            <person name="Nierman W.C."/>
            <person name="Salzberg S.L."/>
            <person name="White O."/>
            <person name="Venter J.C."/>
            <person name="Fraser C.M."/>
            <person name="Kaneko T."/>
            <person name="Nakamura Y."/>
            <person name="Sato S."/>
            <person name="Kato T."/>
            <person name="Asamizu E."/>
            <person name="Sasamoto S."/>
            <person name="Kimura T."/>
            <person name="Idesawa K."/>
            <person name="Kawashima K."/>
            <person name="Kishida Y."/>
            <person name="Kiyokawa C."/>
            <person name="Kohara M."/>
            <person name="Matsumoto M."/>
            <person name="Matsuno A."/>
            <person name="Muraki A."/>
            <person name="Nakayama S."/>
            <person name="Nakazaki N."/>
            <person name="Shinpo S."/>
            <person name="Takeuchi C."/>
            <person name="Wada T."/>
            <person name="Watanabe A."/>
            <person name="Yamada M."/>
            <person name="Yasuda M."/>
            <person name="Tabata S."/>
        </authorList>
    </citation>
    <scope>NUCLEOTIDE SEQUENCE [LARGE SCALE GENOMIC DNA]</scope>
    <source>
        <strain>cv. Columbia</strain>
    </source>
</reference>
<reference key="2">
    <citation type="journal article" date="2017" name="Plant J.">
        <title>Araport11: a complete reannotation of the Arabidopsis thaliana reference genome.</title>
        <authorList>
            <person name="Cheng C.Y."/>
            <person name="Krishnakumar V."/>
            <person name="Chan A.P."/>
            <person name="Thibaud-Nissen F."/>
            <person name="Schobel S."/>
            <person name="Town C.D."/>
        </authorList>
    </citation>
    <scope>GENOME REANNOTATION</scope>
    <source>
        <strain>cv. Columbia</strain>
    </source>
</reference>
<reference key="3">
    <citation type="submission" date="2003-12" db="EMBL/GenBank/DDBJ databases">
        <title>Arabidopsis ORF clones.</title>
        <authorList>
            <person name="Kim C.J."/>
            <person name="Chen H."/>
            <person name="Cheuk R.F."/>
            <person name="Shinn P."/>
            <person name="Ecker J.R."/>
        </authorList>
    </citation>
    <scope>NUCLEOTIDE SEQUENCE [LARGE SCALE MRNA] (ISOFORM 2)</scope>
    <source>
        <strain>cv. Columbia</strain>
    </source>
</reference>
<reference key="4">
    <citation type="submission" date="2004-09" db="EMBL/GenBank/DDBJ databases">
        <title>Large-scale analysis of RIKEN Arabidopsis full-length (RAFL) cDNAs.</title>
        <authorList>
            <person name="Totoki Y."/>
            <person name="Seki M."/>
            <person name="Ishida J."/>
            <person name="Nakajima M."/>
            <person name="Enju A."/>
            <person name="Kamiya A."/>
            <person name="Narusaka M."/>
            <person name="Shin-i T."/>
            <person name="Nakagawa M."/>
            <person name="Sakamoto N."/>
            <person name="Oishi K."/>
            <person name="Kohara Y."/>
            <person name="Kobayashi M."/>
            <person name="Toyoda A."/>
            <person name="Sakaki Y."/>
            <person name="Sakurai T."/>
            <person name="Iida K."/>
            <person name="Akiyama K."/>
            <person name="Satou M."/>
            <person name="Toyoda T."/>
            <person name="Konagaya A."/>
            <person name="Carninci P."/>
            <person name="Kawai J."/>
            <person name="Hayashizaki Y."/>
            <person name="Shinozaki K."/>
        </authorList>
    </citation>
    <scope>NUCLEOTIDE SEQUENCE [LARGE SCALE MRNA] (ISOFORM 2)</scope>
    <source>
        <strain>cv. Columbia</strain>
    </source>
</reference>
<reference key="5">
    <citation type="journal article" date="2007" name="J. Biol. Chem.">
        <title>Plastidic phosphatidic acid phosphatases identified in a distinct subfamily of lipid phosphate phosphatases with prokaryotic origin.</title>
        <authorList>
            <person name="Nakamura Y."/>
            <person name="Tsuchiya M."/>
            <person name="Ohta H."/>
        </authorList>
    </citation>
    <scope>FUNCTION</scope>
    <scope>ACTIVITY REGULATION</scope>
    <scope>BIOPHYSICOCHEMICAL PROPERTIES</scope>
    <scope>SUBCELLULAR LOCATION</scope>
    <scope>TISSUE SPECIFICITY</scope>
    <scope>DISRUPTION PHENOTYPE</scope>
</reference>
<accession>F4J220</accession>
<accession>Q9SVK7</accession>
<organism>
    <name type="scientific">Arabidopsis thaliana</name>
    <name type="common">Mouse-ear cress</name>
    <dbReference type="NCBI Taxonomy" id="3702"/>
    <lineage>
        <taxon>Eukaryota</taxon>
        <taxon>Viridiplantae</taxon>
        <taxon>Streptophyta</taxon>
        <taxon>Embryophyta</taxon>
        <taxon>Tracheophyta</taxon>
        <taxon>Spermatophyta</taxon>
        <taxon>Magnoliopsida</taxon>
        <taxon>eudicotyledons</taxon>
        <taxon>Gunneridae</taxon>
        <taxon>Pentapetalae</taxon>
        <taxon>rosids</taxon>
        <taxon>malvids</taxon>
        <taxon>Brassicales</taxon>
        <taxon>Brassicaceae</taxon>
        <taxon>Camelineae</taxon>
        <taxon>Arabidopsis</taxon>
    </lineage>
</organism>
<keyword id="KW-0025">Alternative splicing</keyword>
<keyword id="KW-0150">Chloroplast</keyword>
<keyword id="KW-0378">Hydrolase</keyword>
<keyword id="KW-0472">Membrane</keyword>
<keyword id="KW-0934">Plastid</keyword>
<keyword id="KW-1001">Plastid inner membrane</keyword>
<keyword id="KW-1185">Reference proteome</keyword>
<keyword id="KW-0809">Transit peptide</keyword>
<keyword id="KW-0812">Transmembrane</keyword>
<keyword id="KW-1133">Transmembrane helix</keyword>
<feature type="transit peptide" description="Chloroplast" evidence="1">
    <location>
        <begin position="1"/>
        <end position="88"/>
    </location>
</feature>
<feature type="chain" id="PRO_0000425227" description="Lipid phosphate phosphatase epsilon 1, chloroplastic">
    <location>
        <begin position="89"/>
        <end position="279"/>
    </location>
</feature>
<feature type="transmembrane region" description="Helical" evidence="1">
    <location>
        <begin position="126"/>
        <end position="142"/>
    </location>
</feature>
<feature type="transmembrane region" description="Helical" evidence="1">
    <location>
        <begin position="164"/>
        <end position="184"/>
    </location>
</feature>
<feature type="transmembrane region" description="Helical" evidence="1">
    <location>
        <begin position="185"/>
        <end position="205"/>
    </location>
</feature>
<feature type="transmembrane region" description="Helical" evidence="1">
    <location>
        <begin position="219"/>
        <end position="239"/>
    </location>
</feature>
<feature type="transmembrane region" description="Helical" evidence="1">
    <location>
        <begin position="255"/>
        <end position="275"/>
    </location>
</feature>
<feature type="splice variant" id="VSP_053603" description="In isoform 2." evidence="3 4">
    <location>
        <begin position="1"/>
        <end position="51"/>
    </location>
</feature>
<name>LPPE1_ARATH</name>
<evidence type="ECO:0000255" key="1"/>
<evidence type="ECO:0000269" key="2">
    <source>
    </source>
</evidence>
<evidence type="ECO:0000303" key="3">
    <source ref="3"/>
</evidence>
<evidence type="ECO:0000303" key="4">
    <source ref="4"/>
</evidence>
<evidence type="ECO:0000305" key="5"/>
<evidence type="ECO:0000305" key="6">
    <source>
    </source>
</evidence>